<evidence type="ECO:0000250" key="1">
    <source>
        <dbReference type="UniProtKB" id="P0A3M6"/>
    </source>
</evidence>
<evidence type="ECO:0000250" key="2">
    <source>
        <dbReference type="UniProtKB" id="P0AD65"/>
    </source>
</evidence>
<evidence type="ECO:0000255" key="3"/>
<evidence type="ECO:0000269" key="4">
    <source>
    </source>
</evidence>
<evidence type="ECO:0000269" key="5">
    <source>
    </source>
</evidence>
<evidence type="ECO:0000303" key="6">
    <source>
    </source>
</evidence>
<evidence type="ECO:0000303" key="7">
    <source>
    </source>
</evidence>
<evidence type="ECO:0000305" key="8"/>
<evidence type="ECO:0000305" key="9">
    <source>
    </source>
</evidence>
<reference key="1">
    <citation type="journal article" date="2007" name="J. Bacteriol.">
        <title>Genome sequence of Avery's virulent serotype 2 strain D39 of Streptococcus pneumoniae and comparison with that of unencapsulated laboratory strain R6.</title>
        <authorList>
            <person name="Lanie J.A."/>
            <person name="Ng W.-L."/>
            <person name="Kazmierczak K.M."/>
            <person name="Andrzejewski T.M."/>
            <person name="Davidsen T.M."/>
            <person name="Wayne K.J."/>
            <person name="Tettelin H."/>
            <person name="Glass J.I."/>
            <person name="Winkler M.E."/>
        </authorList>
    </citation>
    <scope>NUCLEOTIDE SEQUENCE [LARGE SCALE GENOMIC DNA]</scope>
    <source>
        <strain>D39 / NCTC 7466</strain>
    </source>
</reference>
<reference key="2">
    <citation type="journal article" date="2016" name="Mol. Microbiol.">
        <title>Suppression of a deletion mutation in the gene encoding essential PBP2b reveals a new lytic transglycosylase involved in peripheral peptidoglycan synthesis in Streptococcus pneumoniae D39.</title>
        <authorList>
            <person name="Tsui H.T."/>
            <person name="Zheng J.J."/>
            <person name="Magallon A.N."/>
            <person name="Ryan J.D."/>
            <person name="Yunck R."/>
            <person name="Rued B.E."/>
            <person name="Bernhardt T.G."/>
            <person name="Winkler M.E."/>
        </authorList>
    </citation>
    <scope>DISRUPTION PHENOTYPE</scope>
    <source>
        <strain>D39 / NCTC 7466</strain>
    </source>
</reference>
<reference key="3">
    <citation type="journal article" date="2017" name="Mol. Microbiol.">
        <title>Absence of the KhpA and KhpB (JAG/EloR) RNA-binding proteins suppresses the requirement for PBP2b by overproduction of FtsA in Streptococcus pneumoniae D39.</title>
        <authorList>
            <person name="Zheng J.J."/>
            <person name="Perez A.J."/>
            <person name="Tsui H.T."/>
            <person name="Massidda O."/>
            <person name="Winkler M.E."/>
        </authorList>
    </citation>
    <scope>FUNCTION</scope>
    <scope>SUBCELLULAR LOCATION</scope>
    <scope>DISRUPTION PHENOTYPE</scope>
    <source>
        <strain>D39 / NCTC 7466</strain>
    </source>
</reference>
<sequence>MRKFNSHSIPIRLNLLFSIVILLFMTIIGRLLYMQVLNKDFYEKKLASASQTKITSSSARGEIYDASGKPLVENTLKQVVSFTRSNKMTATDLKETAKKLLTYVSISSPNLTERQLADYYLADPEIYKKIVEALPSEKRLDSDGNRLSESELYNNAVDSVQTSQLNYTEDEKKEIYLFSQLNAVGNFATGTIATDPLNDSQVAVIASISKEMPGISISTSWDRKVLETSLSSIVGSVSSEKAGLPAEEAEAYLKKGYSLNDRVGTSYLEKQYEETLQGKRSVKEIHLDKYGNMESVDTIEEGSKGNNIKLTIDLAFQDSVDALLKSYFNSELENGGAKYSEGVYAVALNPKTGAVLSMSGIKHDLKTGELTPDSLGTVTNVFVPGSVVKAATISSGWENGVLSGNQTLTDQSIVFQGSAPINSWYTQAYGSFPITAVQALEYSSNTYMVQTALGLMGQTYQPNMFVGTSNLESAMEKLRSTFGEYGLGTATGIDLPDESTGFVPKEYSFANYITNAFGQFDNYTPMQLAQYVATIANNGVRVAPRIVEGIYGNNDKGGLGDLIQQLQPTEMNKVNISDSDMSILHQGFYQVAHGTSGLTTGRAFSNGALVSISGKTGTAESYVADGQQATNTNAVAYAPSDNPQIAVAVVFPHNTNLTNGVGPSIARDIINLYQKYHPMN</sequence>
<name>PBP2_STRP2</name>
<comment type="function">
    <text evidence="9">A transpeptidase that forms peptide cross-links between adjacent glycan strands in cell wall peptidoglycan (PG). Part of the elongasome machinery that synthesizes peripheral PG.</text>
</comment>
<comment type="subunit">
    <text evidence="1">Interacts with MreC in the elongasome.</text>
</comment>
<comment type="subcellular location">
    <subcellularLocation>
        <location evidence="9">Cell membrane</location>
        <topology evidence="3">Single-pass membrane protein</topology>
    </subcellularLocation>
    <text evidence="5">Localizes to the midcell division sites, colocalizes with StkP.</text>
</comment>
<comment type="disruption phenotype">
    <text evidence="4 5">Essential, it cannot be disrupted; however suppressors of the deletion can be isolated under certain growth conditions.</text>
</comment>
<comment type="similarity">
    <text evidence="8">Belongs to the transpeptidase family.</text>
</comment>
<comment type="sequence caution" evidence="8">
    <conflict type="erroneous initiation">
        <sequence resource="EMBL-CDS" id="ABJ55452"/>
    </conflict>
    <text>Extended N-terminus.</text>
</comment>
<proteinExistence type="inferred from homology"/>
<gene>
    <name evidence="6" type="primary">penA</name>
    <name type="synonym">pbp2b</name>
    <name type="ordered locus">SPD_1486</name>
</gene>
<keyword id="KW-1003">Cell membrane</keyword>
<keyword id="KW-0133">Cell shape</keyword>
<keyword id="KW-0961">Cell wall biogenesis/degradation</keyword>
<keyword id="KW-0472">Membrane</keyword>
<keyword id="KW-0573">Peptidoglycan synthesis</keyword>
<keyword id="KW-1185">Reference proteome</keyword>
<keyword id="KW-0812">Transmembrane</keyword>
<keyword id="KW-1133">Transmembrane helix</keyword>
<dbReference type="EMBL" id="CP000410">
    <property type="protein sequence ID" value="ABJ55452.1"/>
    <property type="status" value="ALT_INIT"/>
    <property type="molecule type" value="Genomic_DNA"/>
</dbReference>
<dbReference type="SMR" id="A0A0H2ZQ75"/>
<dbReference type="PaxDb" id="373153-SPD_1486"/>
<dbReference type="KEGG" id="spd:SPD_1486"/>
<dbReference type="eggNOG" id="COG0768">
    <property type="taxonomic scope" value="Bacteria"/>
</dbReference>
<dbReference type="HOGENOM" id="CLU_009289_7_0_9"/>
<dbReference type="BioCyc" id="SPNE373153:G1G6V-1602-MONOMER"/>
<dbReference type="Proteomes" id="UP000001452">
    <property type="component" value="Chromosome"/>
</dbReference>
<dbReference type="GO" id="GO:0005886">
    <property type="term" value="C:plasma membrane"/>
    <property type="evidence" value="ECO:0007669"/>
    <property type="project" value="UniProtKB-SubCell"/>
</dbReference>
<dbReference type="GO" id="GO:0008658">
    <property type="term" value="F:penicillin binding"/>
    <property type="evidence" value="ECO:0007669"/>
    <property type="project" value="InterPro"/>
</dbReference>
<dbReference type="GO" id="GO:0071972">
    <property type="term" value="F:peptidoglycan L,D-transpeptidase activity"/>
    <property type="evidence" value="ECO:0007669"/>
    <property type="project" value="InterPro"/>
</dbReference>
<dbReference type="GO" id="GO:0071555">
    <property type="term" value="P:cell wall organization"/>
    <property type="evidence" value="ECO:0007669"/>
    <property type="project" value="UniProtKB-KW"/>
</dbReference>
<dbReference type="GO" id="GO:0009252">
    <property type="term" value="P:peptidoglycan biosynthetic process"/>
    <property type="evidence" value="ECO:0007669"/>
    <property type="project" value="UniProtKB-KW"/>
</dbReference>
<dbReference type="GO" id="GO:0008360">
    <property type="term" value="P:regulation of cell shape"/>
    <property type="evidence" value="ECO:0007669"/>
    <property type="project" value="UniProtKB-KW"/>
</dbReference>
<dbReference type="FunFam" id="3.40.710.10:FF:000115">
    <property type="entry name" value="Penicillin-binding protein 2B"/>
    <property type="match status" value="1"/>
</dbReference>
<dbReference type="Gene3D" id="3.40.710.10">
    <property type="entry name" value="DD-peptidase/beta-lactamase superfamily"/>
    <property type="match status" value="1"/>
</dbReference>
<dbReference type="Gene3D" id="3.90.1310.10">
    <property type="entry name" value="Penicillin-binding protein 2a (Domain 2)"/>
    <property type="match status" value="1"/>
</dbReference>
<dbReference type="Gene3D" id="1.10.10.1230">
    <property type="entry name" value="Penicillin-binding protein, N-terminal non-catalytic domain, head sub-domain"/>
    <property type="match status" value="1"/>
</dbReference>
<dbReference type="InterPro" id="IPR050515">
    <property type="entry name" value="Bact_Transpept/Beta-Lactamase"/>
</dbReference>
<dbReference type="InterPro" id="IPR012338">
    <property type="entry name" value="Beta-lactam/transpept-like"/>
</dbReference>
<dbReference type="InterPro" id="IPR047982">
    <property type="entry name" value="PBP2B"/>
</dbReference>
<dbReference type="InterPro" id="IPR005311">
    <property type="entry name" value="PBP_dimer"/>
</dbReference>
<dbReference type="InterPro" id="IPR036138">
    <property type="entry name" value="PBP_dimer_sf"/>
</dbReference>
<dbReference type="InterPro" id="IPR001460">
    <property type="entry name" value="PCN-bd_Tpept"/>
</dbReference>
<dbReference type="NCBIfam" id="NF038278">
    <property type="entry name" value="strep_PBP2B"/>
    <property type="match status" value="1"/>
</dbReference>
<dbReference type="PANTHER" id="PTHR30627">
    <property type="entry name" value="PEPTIDOGLYCAN D,D-TRANSPEPTIDASE"/>
    <property type="match status" value="1"/>
</dbReference>
<dbReference type="PANTHER" id="PTHR30627:SF2">
    <property type="entry name" value="PEPTIDOGLYCAN D,D-TRANSPEPTIDASE MRDA"/>
    <property type="match status" value="1"/>
</dbReference>
<dbReference type="Pfam" id="PF03717">
    <property type="entry name" value="PBP_dimer"/>
    <property type="match status" value="1"/>
</dbReference>
<dbReference type="Pfam" id="PF00905">
    <property type="entry name" value="Transpeptidase"/>
    <property type="match status" value="1"/>
</dbReference>
<dbReference type="SUPFAM" id="SSF56601">
    <property type="entry name" value="beta-lactamase/transpeptidase-like"/>
    <property type="match status" value="1"/>
</dbReference>
<dbReference type="SUPFAM" id="SSF56519">
    <property type="entry name" value="Penicillin binding protein dimerisation domain"/>
    <property type="match status" value="1"/>
</dbReference>
<feature type="chain" id="PRO_0000454545" description="Penicillin-binding protein 2B">
    <location>
        <begin position="1"/>
        <end position="680"/>
    </location>
</feature>
<feature type="topological domain" description="Cytoplasmic" evidence="8">
    <location>
        <begin position="1"/>
        <end position="8"/>
    </location>
</feature>
<feature type="transmembrane region" description="Helical" evidence="3">
    <location>
        <begin position="9"/>
        <end position="29"/>
    </location>
</feature>
<feature type="topological domain" description="Extracellular" evidence="8">
    <location>
        <begin position="30"/>
        <end position="680"/>
    </location>
</feature>
<feature type="active site" description="Acyl-ester intermediate" evidence="2">
    <location>
        <position position="386"/>
    </location>
</feature>
<accession>A0A0H2ZQ75</accession>
<organism>
    <name type="scientific">Streptococcus pneumoniae serotype 2 (strain D39 / NCTC 7466)</name>
    <dbReference type="NCBI Taxonomy" id="373153"/>
    <lineage>
        <taxon>Bacteria</taxon>
        <taxon>Bacillati</taxon>
        <taxon>Bacillota</taxon>
        <taxon>Bacilli</taxon>
        <taxon>Lactobacillales</taxon>
        <taxon>Streptococcaceae</taxon>
        <taxon>Streptococcus</taxon>
    </lineage>
</organism>
<protein>
    <recommendedName>
        <fullName>Penicillin-binding protein 2B</fullName>
        <shortName evidence="7">PBP2b</shortName>
    </recommendedName>
</protein>